<dbReference type="EC" id="3.5.4.5" evidence="1"/>
<dbReference type="EMBL" id="CP001127">
    <property type="protein sequence ID" value="ACF90520.1"/>
    <property type="molecule type" value="Genomic_DNA"/>
</dbReference>
<dbReference type="RefSeq" id="WP_000553530.1">
    <property type="nucleotide sequence ID" value="NC_011094.1"/>
</dbReference>
<dbReference type="SMR" id="B4TNP0"/>
<dbReference type="KEGG" id="sew:SeSA_A2422"/>
<dbReference type="HOGENOM" id="CLU_052424_0_0_6"/>
<dbReference type="Proteomes" id="UP000001865">
    <property type="component" value="Chromosome"/>
</dbReference>
<dbReference type="GO" id="GO:0005829">
    <property type="term" value="C:cytosol"/>
    <property type="evidence" value="ECO:0007669"/>
    <property type="project" value="TreeGrafter"/>
</dbReference>
<dbReference type="GO" id="GO:0004126">
    <property type="term" value="F:cytidine deaminase activity"/>
    <property type="evidence" value="ECO:0007669"/>
    <property type="project" value="UniProtKB-UniRule"/>
</dbReference>
<dbReference type="GO" id="GO:0042802">
    <property type="term" value="F:identical protein binding"/>
    <property type="evidence" value="ECO:0007669"/>
    <property type="project" value="UniProtKB-ARBA"/>
</dbReference>
<dbReference type="GO" id="GO:0008270">
    <property type="term" value="F:zinc ion binding"/>
    <property type="evidence" value="ECO:0007669"/>
    <property type="project" value="UniProtKB-UniRule"/>
</dbReference>
<dbReference type="GO" id="GO:0009972">
    <property type="term" value="P:cytidine deamination"/>
    <property type="evidence" value="ECO:0007669"/>
    <property type="project" value="InterPro"/>
</dbReference>
<dbReference type="CDD" id="cd01283">
    <property type="entry name" value="cytidine_deaminase"/>
    <property type="match status" value="2"/>
</dbReference>
<dbReference type="FunFam" id="3.40.140.10:FF:000006">
    <property type="entry name" value="Cytidine deaminase"/>
    <property type="match status" value="1"/>
</dbReference>
<dbReference type="FunFam" id="3.40.140.10:FF:000007">
    <property type="entry name" value="Cytidine deaminase"/>
    <property type="match status" value="1"/>
</dbReference>
<dbReference type="Gene3D" id="3.40.140.10">
    <property type="entry name" value="Cytidine Deaminase, domain 2"/>
    <property type="match status" value="2"/>
</dbReference>
<dbReference type="HAMAP" id="MF_01558">
    <property type="entry name" value="Cyt_deam"/>
    <property type="match status" value="1"/>
</dbReference>
<dbReference type="InterPro" id="IPR016192">
    <property type="entry name" value="APOBEC/CMP_deaminase_Zn-bd"/>
</dbReference>
<dbReference type="InterPro" id="IPR002125">
    <property type="entry name" value="CMP_dCMP_dom"/>
</dbReference>
<dbReference type="InterPro" id="IPR013171">
    <property type="entry name" value="Cyd/dCyd_deaminase_Zn-bd"/>
</dbReference>
<dbReference type="InterPro" id="IPR050202">
    <property type="entry name" value="Cyt/Deoxycyt_deaminase"/>
</dbReference>
<dbReference type="InterPro" id="IPR006263">
    <property type="entry name" value="Cyt_deam_dimer"/>
</dbReference>
<dbReference type="InterPro" id="IPR016193">
    <property type="entry name" value="Cytidine_deaminase-like"/>
</dbReference>
<dbReference type="InterPro" id="IPR020797">
    <property type="entry name" value="Cytidine_deaminase_bacteria"/>
</dbReference>
<dbReference type="NCBIfam" id="TIGR01355">
    <property type="entry name" value="cyt_deam_dimer"/>
    <property type="match status" value="1"/>
</dbReference>
<dbReference type="NCBIfam" id="NF006537">
    <property type="entry name" value="PRK09027.1"/>
    <property type="match status" value="1"/>
</dbReference>
<dbReference type="PANTHER" id="PTHR11644">
    <property type="entry name" value="CYTIDINE DEAMINASE"/>
    <property type="match status" value="1"/>
</dbReference>
<dbReference type="PANTHER" id="PTHR11644:SF2">
    <property type="entry name" value="CYTIDINE DEAMINASE"/>
    <property type="match status" value="1"/>
</dbReference>
<dbReference type="Pfam" id="PF00383">
    <property type="entry name" value="dCMP_cyt_deam_1"/>
    <property type="match status" value="1"/>
</dbReference>
<dbReference type="Pfam" id="PF08211">
    <property type="entry name" value="dCMP_cyt_deam_2"/>
    <property type="match status" value="1"/>
</dbReference>
<dbReference type="PIRSF" id="PIRSF006334">
    <property type="entry name" value="Cdd_plus_pseudo"/>
    <property type="match status" value="1"/>
</dbReference>
<dbReference type="SUPFAM" id="SSF53927">
    <property type="entry name" value="Cytidine deaminase-like"/>
    <property type="match status" value="2"/>
</dbReference>
<dbReference type="PROSITE" id="PS00903">
    <property type="entry name" value="CYT_DCMP_DEAMINASES_1"/>
    <property type="match status" value="1"/>
</dbReference>
<dbReference type="PROSITE" id="PS51747">
    <property type="entry name" value="CYT_DCMP_DEAMINASES_2"/>
    <property type="match status" value="2"/>
</dbReference>
<proteinExistence type="inferred from homology"/>
<accession>B4TNP0</accession>
<feature type="chain" id="PRO_1000147114" description="Cytidine deaminase">
    <location>
        <begin position="1"/>
        <end position="294"/>
    </location>
</feature>
<feature type="domain" description="CMP/dCMP-type deaminase 1" evidence="2">
    <location>
        <begin position="48"/>
        <end position="168"/>
    </location>
</feature>
<feature type="domain" description="CMP/dCMP-type deaminase 2" evidence="2">
    <location>
        <begin position="186"/>
        <end position="294"/>
    </location>
</feature>
<feature type="active site" description="Proton donor" evidence="1">
    <location>
        <position position="104"/>
    </location>
</feature>
<feature type="binding site" evidence="1">
    <location>
        <begin position="89"/>
        <end position="91"/>
    </location>
    <ligand>
        <name>substrate</name>
    </ligand>
</feature>
<feature type="binding site" evidence="1">
    <location>
        <position position="102"/>
    </location>
    <ligand>
        <name>Zn(2+)</name>
        <dbReference type="ChEBI" id="CHEBI:29105"/>
        <note>catalytic</note>
    </ligand>
</feature>
<feature type="binding site" evidence="1">
    <location>
        <position position="129"/>
    </location>
    <ligand>
        <name>Zn(2+)</name>
        <dbReference type="ChEBI" id="CHEBI:29105"/>
        <note>catalytic</note>
    </ligand>
</feature>
<feature type="binding site" evidence="1">
    <location>
        <position position="132"/>
    </location>
    <ligand>
        <name>Zn(2+)</name>
        <dbReference type="ChEBI" id="CHEBI:29105"/>
        <note>catalytic</note>
    </ligand>
</feature>
<reference key="1">
    <citation type="journal article" date="2011" name="J. Bacteriol.">
        <title>Comparative genomics of 28 Salmonella enterica isolates: evidence for CRISPR-mediated adaptive sublineage evolution.</title>
        <authorList>
            <person name="Fricke W.F."/>
            <person name="Mammel M.K."/>
            <person name="McDermott P.F."/>
            <person name="Tartera C."/>
            <person name="White D.G."/>
            <person name="Leclerc J.E."/>
            <person name="Ravel J."/>
            <person name="Cebula T.A."/>
        </authorList>
    </citation>
    <scope>NUCLEOTIDE SEQUENCE [LARGE SCALE GENOMIC DNA]</scope>
    <source>
        <strain>CVM19633</strain>
    </source>
</reference>
<comment type="function">
    <text evidence="1">This enzyme scavenges exogenous and endogenous cytidine and 2'-deoxycytidine for UMP synthesis.</text>
</comment>
<comment type="catalytic activity">
    <reaction evidence="1">
        <text>cytidine + H2O + H(+) = uridine + NH4(+)</text>
        <dbReference type="Rhea" id="RHEA:16069"/>
        <dbReference type="ChEBI" id="CHEBI:15377"/>
        <dbReference type="ChEBI" id="CHEBI:15378"/>
        <dbReference type="ChEBI" id="CHEBI:16704"/>
        <dbReference type="ChEBI" id="CHEBI:17562"/>
        <dbReference type="ChEBI" id="CHEBI:28938"/>
        <dbReference type="EC" id="3.5.4.5"/>
    </reaction>
</comment>
<comment type="catalytic activity">
    <reaction evidence="1">
        <text>2'-deoxycytidine + H2O + H(+) = 2'-deoxyuridine + NH4(+)</text>
        <dbReference type="Rhea" id="RHEA:13433"/>
        <dbReference type="ChEBI" id="CHEBI:15377"/>
        <dbReference type="ChEBI" id="CHEBI:15378"/>
        <dbReference type="ChEBI" id="CHEBI:15698"/>
        <dbReference type="ChEBI" id="CHEBI:16450"/>
        <dbReference type="ChEBI" id="CHEBI:28938"/>
        <dbReference type="EC" id="3.5.4.5"/>
    </reaction>
</comment>
<comment type="cofactor">
    <cofactor evidence="1">
        <name>Zn(2+)</name>
        <dbReference type="ChEBI" id="CHEBI:29105"/>
    </cofactor>
    <text evidence="1">Binds 1 zinc ion.</text>
</comment>
<comment type="subunit">
    <text evidence="1">Homodimer.</text>
</comment>
<comment type="similarity">
    <text evidence="1">Belongs to the cytidine and deoxycytidylate deaminase family.</text>
</comment>
<gene>
    <name evidence="1" type="primary">cdd</name>
    <name type="ordered locus">SeSA_A2422</name>
</gene>
<sequence>MHPRFQTAFAQLADNLQSALAPILADHHFPAMLTAEQVSTLKNTAGLDEDALAFALLPLAAACARTDLSHFNVGAIARGVSGNWYFGANMEFLGTTMQQTVHAEQSAISHAWLRGEKGLAAVTVNYTPCGHCRQFMNELNSGLDLRIHLPGRAPHTLRDYLPDAFGPKDLEIKTLLMDEQDHGFTLTGDTLTQAAITAANKSHMPYSHSPSGVALECKDGRIFTGSYAENAAFNPTLPPLQGALNLLSLNGYDYADIQRAILAEKGDAALIQWDATAATLKALGCHNIDRVLLG</sequence>
<evidence type="ECO:0000255" key="1">
    <source>
        <dbReference type="HAMAP-Rule" id="MF_01558"/>
    </source>
</evidence>
<evidence type="ECO:0000255" key="2">
    <source>
        <dbReference type="PROSITE-ProRule" id="PRU01083"/>
    </source>
</evidence>
<organism>
    <name type="scientific">Salmonella schwarzengrund (strain CVM19633)</name>
    <dbReference type="NCBI Taxonomy" id="439843"/>
    <lineage>
        <taxon>Bacteria</taxon>
        <taxon>Pseudomonadati</taxon>
        <taxon>Pseudomonadota</taxon>
        <taxon>Gammaproteobacteria</taxon>
        <taxon>Enterobacterales</taxon>
        <taxon>Enterobacteriaceae</taxon>
        <taxon>Salmonella</taxon>
    </lineage>
</organism>
<protein>
    <recommendedName>
        <fullName evidence="1">Cytidine deaminase</fullName>
        <ecNumber evidence="1">3.5.4.5</ecNumber>
    </recommendedName>
    <alternativeName>
        <fullName evidence="1">Cytidine aminohydrolase</fullName>
        <shortName evidence="1">CDA</shortName>
    </alternativeName>
</protein>
<keyword id="KW-0378">Hydrolase</keyword>
<keyword id="KW-0479">Metal-binding</keyword>
<keyword id="KW-0862">Zinc</keyword>
<name>CDD_SALSV</name>